<gene>
    <name evidence="1" type="primary">rplX</name>
    <name evidence="1" type="synonym">rpl24</name>
    <name type="ordered locus">HI_0789</name>
</gene>
<feature type="chain" id="PRO_0000130662" description="Large ribosomal subunit protein uL24">
    <location>
        <begin position="1"/>
        <end position="103"/>
    </location>
</feature>
<proteinExistence type="inferred from homology"/>
<reference key="1">
    <citation type="journal article" date="1995" name="Science">
        <title>Whole-genome random sequencing and assembly of Haemophilus influenzae Rd.</title>
        <authorList>
            <person name="Fleischmann R.D."/>
            <person name="Adams M.D."/>
            <person name="White O."/>
            <person name="Clayton R.A."/>
            <person name="Kirkness E.F."/>
            <person name="Kerlavage A.R."/>
            <person name="Bult C.J."/>
            <person name="Tomb J.-F."/>
            <person name="Dougherty B.A."/>
            <person name="Merrick J.M."/>
            <person name="McKenney K."/>
            <person name="Sutton G.G."/>
            <person name="FitzHugh W."/>
            <person name="Fields C.A."/>
            <person name="Gocayne J.D."/>
            <person name="Scott J.D."/>
            <person name="Shirley R."/>
            <person name="Liu L.-I."/>
            <person name="Glodek A."/>
            <person name="Kelley J.M."/>
            <person name="Weidman J.F."/>
            <person name="Phillips C.A."/>
            <person name="Spriggs T."/>
            <person name="Hedblom E."/>
            <person name="Cotton M.D."/>
            <person name="Utterback T.R."/>
            <person name="Hanna M.C."/>
            <person name="Nguyen D.T."/>
            <person name="Saudek D.M."/>
            <person name="Brandon R.C."/>
            <person name="Fine L.D."/>
            <person name="Fritchman J.L."/>
            <person name="Fuhrmann J.L."/>
            <person name="Geoghagen N.S.M."/>
            <person name="Gnehm C.L."/>
            <person name="McDonald L.A."/>
            <person name="Small K.V."/>
            <person name="Fraser C.M."/>
            <person name="Smith H.O."/>
            <person name="Venter J.C."/>
        </authorList>
    </citation>
    <scope>NUCLEOTIDE SEQUENCE [LARGE SCALE GENOMIC DNA]</scope>
    <source>
        <strain>ATCC 51907 / DSM 11121 / KW20 / Rd</strain>
    </source>
</reference>
<organism>
    <name type="scientific">Haemophilus influenzae (strain ATCC 51907 / DSM 11121 / KW20 / Rd)</name>
    <dbReference type="NCBI Taxonomy" id="71421"/>
    <lineage>
        <taxon>Bacteria</taxon>
        <taxon>Pseudomonadati</taxon>
        <taxon>Pseudomonadota</taxon>
        <taxon>Gammaproteobacteria</taxon>
        <taxon>Pasteurellales</taxon>
        <taxon>Pasteurellaceae</taxon>
        <taxon>Haemophilus</taxon>
    </lineage>
</organism>
<dbReference type="EMBL" id="L42023">
    <property type="protein sequence ID" value="AAC22447.1"/>
    <property type="molecule type" value="Genomic_DNA"/>
</dbReference>
<dbReference type="PIR" id="G64093">
    <property type="entry name" value="G64093"/>
</dbReference>
<dbReference type="RefSeq" id="NP_438948.1">
    <property type="nucleotide sequence ID" value="NC_000907.1"/>
</dbReference>
<dbReference type="SMR" id="P44362"/>
<dbReference type="STRING" id="71421.HI_0789"/>
<dbReference type="EnsemblBacteria" id="AAC22447">
    <property type="protein sequence ID" value="AAC22447"/>
    <property type="gene ID" value="HI_0789"/>
</dbReference>
<dbReference type="KEGG" id="hin:HI_0789"/>
<dbReference type="PATRIC" id="fig|71421.8.peg.828"/>
<dbReference type="eggNOG" id="COG0198">
    <property type="taxonomic scope" value="Bacteria"/>
</dbReference>
<dbReference type="HOGENOM" id="CLU_093315_2_2_6"/>
<dbReference type="OrthoDB" id="9807419at2"/>
<dbReference type="PhylomeDB" id="P44362"/>
<dbReference type="BioCyc" id="HINF71421:G1GJ1-829-MONOMER"/>
<dbReference type="Proteomes" id="UP000000579">
    <property type="component" value="Chromosome"/>
</dbReference>
<dbReference type="GO" id="GO:0022625">
    <property type="term" value="C:cytosolic large ribosomal subunit"/>
    <property type="evidence" value="ECO:0000318"/>
    <property type="project" value="GO_Central"/>
</dbReference>
<dbReference type="GO" id="GO:0019843">
    <property type="term" value="F:rRNA binding"/>
    <property type="evidence" value="ECO:0007669"/>
    <property type="project" value="UniProtKB-UniRule"/>
</dbReference>
<dbReference type="GO" id="GO:0003735">
    <property type="term" value="F:structural constituent of ribosome"/>
    <property type="evidence" value="ECO:0007669"/>
    <property type="project" value="InterPro"/>
</dbReference>
<dbReference type="GO" id="GO:0006412">
    <property type="term" value="P:translation"/>
    <property type="evidence" value="ECO:0000318"/>
    <property type="project" value="GO_Central"/>
</dbReference>
<dbReference type="CDD" id="cd06089">
    <property type="entry name" value="KOW_RPL26"/>
    <property type="match status" value="1"/>
</dbReference>
<dbReference type="FunFam" id="2.30.30.30:FF:000004">
    <property type="entry name" value="50S ribosomal protein L24"/>
    <property type="match status" value="1"/>
</dbReference>
<dbReference type="Gene3D" id="2.30.30.30">
    <property type="match status" value="1"/>
</dbReference>
<dbReference type="HAMAP" id="MF_01326_B">
    <property type="entry name" value="Ribosomal_uL24_B"/>
    <property type="match status" value="1"/>
</dbReference>
<dbReference type="InterPro" id="IPR005824">
    <property type="entry name" value="KOW"/>
</dbReference>
<dbReference type="InterPro" id="IPR014722">
    <property type="entry name" value="Rib_uL2_dom2"/>
</dbReference>
<dbReference type="InterPro" id="IPR003256">
    <property type="entry name" value="Ribosomal_uL24"/>
</dbReference>
<dbReference type="InterPro" id="IPR005825">
    <property type="entry name" value="Ribosomal_uL24_CS"/>
</dbReference>
<dbReference type="InterPro" id="IPR041988">
    <property type="entry name" value="Ribosomal_uL24_KOW"/>
</dbReference>
<dbReference type="InterPro" id="IPR008991">
    <property type="entry name" value="Translation_prot_SH3-like_sf"/>
</dbReference>
<dbReference type="NCBIfam" id="TIGR01079">
    <property type="entry name" value="rplX_bact"/>
    <property type="match status" value="1"/>
</dbReference>
<dbReference type="PANTHER" id="PTHR12903">
    <property type="entry name" value="MITOCHONDRIAL RIBOSOMAL PROTEIN L24"/>
    <property type="match status" value="1"/>
</dbReference>
<dbReference type="Pfam" id="PF00467">
    <property type="entry name" value="KOW"/>
    <property type="match status" value="1"/>
</dbReference>
<dbReference type="Pfam" id="PF17136">
    <property type="entry name" value="ribosomal_L24"/>
    <property type="match status" value="1"/>
</dbReference>
<dbReference type="SMART" id="SM00739">
    <property type="entry name" value="KOW"/>
    <property type="match status" value="1"/>
</dbReference>
<dbReference type="SUPFAM" id="SSF50104">
    <property type="entry name" value="Translation proteins SH3-like domain"/>
    <property type="match status" value="1"/>
</dbReference>
<dbReference type="PROSITE" id="PS01108">
    <property type="entry name" value="RIBOSOMAL_L24"/>
    <property type="match status" value="1"/>
</dbReference>
<name>RL24_HAEIN</name>
<comment type="function">
    <text evidence="1">One of two assembly initiator proteins, it binds directly to the 5'-end of the 23S rRNA, where it nucleates assembly of the 50S subunit.</text>
</comment>
<comment type="function">
    <text evidence="1">One of the proteins that surrounds the polypeptide exit tunnel on the outside of the subunit.</text>
</comment>
<comment type="subunit">
    <text evidence="1">Part of the 50S ribosomal subunit.</text>
</comment>
<comment type="similarity">
    <text evidence="1">Belongs to the universal ribosomal protein uL24 family.</text>
</comment>
<protein>
    <recommendedName>
        <fullName evidence="1">Large ribosomal subunit protein uL24</fullName>
    </recommendedName>
    <alternativeName>
        <fullName evidence="2">50S ribosomal protein L24</fullName>
    </alternativeName>
</protein>
<evidence type="ECO:0000255" key="1">
    <source>
        <dbReference type="HAMAP-Rule" id="MF_01326"/>
    </source>
</evidence>
<evidence type="ECO:0000305" key="2"/>
<sequence>MPAKIRQNDEVIVLTGKDKGKRGKVTKVLPNGKVFVEGINIITKHEKPVPALGKAGGLVKKEAAIDASNVAIFNPKTNKADRVGFRFEDGKKVRFFKSNNEII</sequence>
<keyword id="KW-1185">Reference proteome</keyword>
<keyword id="KW-0687">Ribonucleoprotein</keyword>
<keyword id="KW-0689">Ribosomal protein</keyword>
<keyword id="KW-0694">RNA-binding</keyword>
<keyword id="KW-0699">rRNA-binding</keyword>
<accession>P44362</accession>